<name>CHEB_PECAS</name>
<gene>
    <name evidence="1" type="primary">cheB</name>
    <name type="ordered locus">ECA1693</name>
</gene>
<evidence type="ECO:0000255" key="1">
    <source>
        <dbReference type="HAMAP-Rule" id="MF_00099"/>
    </source>
</evidence>
<evidence type="ECO:0000269" key="2">
    <source>
    </source>
</evidence>
<evidence type="ECO:0000303" key="3">
    <source>
    </source>
</evidence>
<evidence type="ECO:0007744" key="4">
    <source>
        <dbReference type="PDB" id="6YMZ"/>
    </source>
</evidence>
<evidence type="ECO:0007829" key="5">
    <source>
        <dbReference type="PDB" id="6YMZ"/>
    </source>
</evidence>
<keyword id="KW-0002">3D-structure</keyword>
<keyword id="KW-0145">Chemotaxis</keyword>
<keyword id="KW-0963">Cytoplasm</keyword>
<keyword id="KW-0378">Hydrolase</keyword>
<keyword id="KW-0597">Phosphoprotein</keyword>
<keyword id="KW-1185">Reference proteome</keyword>
<dbReference type="EC" id="3.1.1.61" evidence="1"/>
<dbReference type="EC" id="3.5.1.44" evidence="1"/>
<dbReference type="EMBL" id="BX950851">
    <property type="protein sequence ID" value="CAG74599.1"/>
    <property type="molecule type" value="Genomic_DNA"/>
</dbReference>
<dbReference type="RefSeq" id="WP_011093272.1">
    <property type="nucleotide sequence ID" value="NC_004547.2"/>
</dbReference>
<dbReference type="PDB" id="6YMZ">
    <property type="method" value="X-ray"/>
    <property type="resolution" value="2.30 A"/>
    <property type="chains" value="A/B/C/D/E=1-350"/>
</dbReference>
<dbReference type="PDBsum" id="6YMZ"/>
<dbReference type="SMR" id="Q6D6I7"/>
<dbReference type="STRING" id="218491.ECA1693"/>
<dbReference type="KEGG" id="eca:ECA1693"/>
<dbReference type="PATRIC" id="fig|218491.5.peg.1720"/>
<dbReference type="eggNOG" id="COG2201">
    <property type="taxonomic scope" value="Bacteria"/>
</dbReference>
<dbReference type="HOGENOM" id="CLU_000445_51_0_6"/>
<dbReference type="OrthoDB" id="9793421at2"/>
<dbReference type="Proteomes" id="UP000007966">
    <property type="component" value="Chromosome"/>
</dbReference>
<dbReference type="GO" id="GO:0005737">
    <property type="term" value="C:cytoplasm"/>
    <property type="evidence" value="ECO:0007669"/>
    <property type="project" value="UniProtKB-SubCell"/>
</dbReference>
<dbReference type="GO" id="GO:0000156">
    <property type="term" value="F:phosphorelay response regulator activity"/>
    <property type="evidence" value="ECO:0007669"/>
    <property type="project" value="InterPro"/>
</dbReference>
<dbReference type="GO" id="GO:0008984">
    <property type="term" value="F:protein-glutamate methylesterase activity"/>
    <property type="evidence" value="ECO:0007669"/>
    <property type="project" value="UniProtKB-UniRule"/>
</dbReference>
<dbReference type="GO" id="GO:0050568">
    <property type="term" value="F:protein-glutamine glutaminase activity"/>
    <property type="evidence" value="ECO:0007669"/>
    <property type="project" value="UniProtKB-UniRule"/>
</dbReference>
<dbReference type="GO" id="GO:0006935">
    <property type="term" value="P:chemotaxis"/>
    <property type="evidence" value="ECO:0007669"/>
    <property type="project" value="UniProtKB-UniRule"/>
</dbReference>
<dbReference type="CDD" id="cd16432">
    <property type="entry name" value="CheB_Rec"/>
    <property type="match status" value="1"/>
</dbReference>
<dbReference type="CDD" id="cd17541">
    <property type="entry name" value="REC_CheB-like"/>
    <property type="match status" value="1"/>
</dbReference>
<dbReference type="FunFam" id="3.40.50.180:FF:000001">
    <property type="entry name" value="Protein-glutamate methylesterase/protein-glutamine glutaminase"/>
    <property type="match status" value="1"/>
</dbReference>
<dbReference type="FunFam" id="3.40.50.2300:FF:000060">
    <property type="entry name" value="Protein-glutamate methylesterase/protein-glutamine glutaminase"/>
    <property type="match status" value="1"/>
</dbReference>
<dbReference type="Gene3D" id="3.40.50.2300">
    <property type="match status" value="1"/>
</dbReference>
<dbReference type="Gene3D" id="3.40.50.180">
    <property type="entry name" value="Methylesterase CheB, C-terminal domain"/>
    <property type="match status" value="1"/>
</dbReference>
<dbReference type="HAMAP" id="MF_00099">
    <property type="entry name" value="CheB_chemtxs"/>
    <property type="match status" value="1"/>
</dbReference>
<dbReference type="InterPro" id="IPR008248">
    <property type="entry name" value="CheB-like"/>
</dbReference>
<dbReference type="InterPro" id="IPR035909">
    <property type="entry name" value="CheB_C"/>
</dbReference>
<dbReference type="InterPro" id="IPR011006">
    <property type="entry name" value="CheY-like_superfamily"/>
</dbReference>
<dbReference type="InterPro" id="IPR000673">
    <property type="entry name" value="Sig_transdc_resp-reg_Me-estase"/>
</dbReference>
<dbReference type="InterPro" id="IPR001789">
    <property type="entry name" value="Sig_transdc_resp-reg_receiver"/>
</dbReference>
<dbReference type="NCBIfam" id="NF001965">
    <property type="entry name" value="PRK00742.1"/>
    <property type="match status" value="1"/>
</dbReference>
<dbReference type="NCBIfam" id="NF009206">
    <property type="entry name" value="PRK12555.1"/>
    <property type="match status" value="1"/>
</dbReference>
<dbReference type="PANTHER" id="PTHR42872">
    <property type="entry name" value="PROTEIN-GLUTAMATE METHYLESTERASE/PROTEIN-GLUTAMINE GLUTAMINASE"/>
    <property type="match status" value="1"/>
</dbReference>
<dbReference type="PANTHER" id="PTHR42872:SF6">
    <property type="entry name" value="PROTEIN-GLUTAMATE METHYLESTERASE_PROTEIN-GLUTAMINE GLUTAMINASE"/>
    <property type="match status" value="1"/>
</dbReference>
<dbReference type="Pfam" id="PF01339">
    <property type="entry name" value="CheB_methylest"/>
    <property type="match status" value="1"/>
</dbReference>
<dbReference type="Pfam" id="PF00072">
    <property type="entry name" value="Response_reg"/>
    <property type="match status" value="1"/>
</dbReference>
<dbReference type="PIRSF" id="PIRSF000876">
    <property type="entry name" value="RR_chemtxs_CheB"/>
    <property type="match status" value="1"/>
</dbReference>
<dbReference type="SMART" id="SM00448">
    <property type="entry name" value="REC"/>
    <property type="match status" value="1"/>
</dbReference>
<dbReference type="SUPFAM" id="SSF52172">
    <property type="entry name" value="CheY-like"/>
    <property type="match status" value="1"/>
</dbReference>
<dbReference type="SUPFAM" id="SSF52738">
    <property type="entry name" value="Methylesterase CheB, C-terminal domain"/>
    <property type="match status" value="1"/>
</dbReference>
<dbReference type="PROSITE" id="PS50122">
    <property type="entry name" value="CHEB"/>
    <property type="match status" value="1"/>
</dbReference>
<dbReference type="PROSITE" id="PS50110">
    <property type="entry name" value="RESPONSE_REGULATORY"/>
    <property type="match status" value="1"/>
</dbReference>
<feature type="chain" id="PRO_0000225460" description="Protein-glutamate methylesterase/protein-glutamine glutaminase">
    <location>
        <begin position="1"/>
        <end position="350"/>
    </location>
</feature>
<feature type="domain" description="Response regulatory" evidence="1">
    <location>
        <begin position="5"/>
        <end position="122"/>
    </location>
</feature>
<feature type="domain" description="CheB-type methylesterase" evidence="1">
    <location>
        <begin position="153"/>
        <end position="345"/>
    </location>
</feature>
<feature type="active site" evidence="1">
    <location>
        <position position="165"/>
    </location>
</feature>
<feature type="active site" evidence="1">
    <location>
        <position position="191"/>
    </location>
</feature>
<feature type="active site" evidence="1">
    <location>
        <position position="287"/>
    </location>
</feature>
<feature type="modified residue" description="4-aspartylphosphate" evidence="1">
    <location>
        <position position="56"/>
    </location>
</feature>
<feature type="strand" evidence="5">
    <location>
        <begin position="4"/>
        <end position="9"/>
    </location>
</feature>
<feature type="helix" evidence="5">
    <location>
        <begin position="13"/>
        <end position="24"/>
    </location>
</feature>
<feature type="strand" evidence="5">
    <location>
        <begin position="29"/>
        <end position="37"/>
    </location>
</feature>
<feature type="helix" evidence="5">
    <location>
        <begin position="38"/>
        <end position="48"/>
    </location>
</feature>
<feature type="strand" evidence="5">
    <location>
        <begin position="51"/>
        <end position="57"/>
    </location>
</feature>
<feature type="strand" evidence="5">
    <location>
        <begin position="60"/>
        <end position="62"/>
    </location>
</feature>
<feature type="helix" evidence="5">
    <location>
        <begin position="64"/>
        <end position="74"/>
    </location>
</feature>
<feature type="strand" evidence="5">
    <location>
        <begin position="79"/>
        <end position="83"/>
    </location>
</feature>
<feature type="helix" evidence="5">
    <location>
        <begin position="87"/>
        <end position="99"/>
    </location>
</feature>
<feature type="strand" evidence="5">
    <location>
        <begin position="103"/>
        <end position="106"/>
    </location>
</feature>
<feature type="helix" evidence="5">
    <location>
        <begin position="113"/>
        <end position="132"/>
    </location>
</feature>
<feature type="strand" evidence="5">
    <location>
        <begin position="159"/>
        <end position="164"/>
    </location>
</feature>
<feature type="helix" evidence="5">
    <location>
        <begin position="168"/>
        <end position="176"/>
    </location>
</feature>
<feature type="strand" evidence="5">
    <location>
        <begin position="185"/>
        <end position="190"/>
    </location>
</feature>
<feature type="helix" evidence="5">
    <location>
        <begin position="196"/>
        <end position="207"/>
    </location>
</feature>
<feature type="strand" evidence="5">
    <location>
        <begin position="209"/>
        <end position="214"/>
    </location>
</feature>
<feature type="strand" evidence="5">
    <location>
        <begin position="225"/>
        <end position="228"/>
    </location>
</feature>
<feature type="strand" evidence="5">
    <location>
        <begin position="233"/>
        <end position="240"/>
    </location>
</feature>
<feature type="strand" evidence="5">
    <location>
        <begin position="243"/>
        <end position="249"/>
    </location>
</feature>
<feature type="strand" evidence="5">
    <location>
        <begin position="257"/>
        <end position="259"/>
    </location>
</feature>
<feature type="helix" evidence="5">
    <location>
        <begin position="261"/>
        <end position="271"/>
    </location>
</feature>
<feature type="helix" evidence="5">
    <location>
        <begin position="273"/>
        <end position="275"/>
    </location>
</feature>
<feature type="strand" evidence="5">
    <location>
        <begin position="276"/>
        <end position="280"/>
    </location>
</feature>
<feature type="strand" evidence="5">
    <location>
        <begin position="282"/>
        <end position="285"/>
    </location>
</feature>
<feature type="helix" evidence="5">
    <location>
        <begin position="289"/>
        <end position="297"/>
    </location>
</feature>
<feature type="strand" evidence="5">
    <location>
        <begin position="301"/>
        <end position="305"/>
    </location>
</feature>
<feature type="helix" evidence="5">
    <location>
        <begin position="307"/>
        <end position="309"/>
    </location>
</feature>
<feature type="strand" evidence="5">
    <location>
        <begin position="311"/>
        <end position="314"/>
    </location>
</feature>
<feature type="helix" evidence="5">
    <location>
        <begin position="315"/>
        <end position="322"/>
    </location>
</feature>
<feature type="strand" evidence="5">
    <location>
        <begin position="326"/>
        <end position="329"/>
    </location>
</feature>
<feature type="helix" evidence="5">
    <location>
        <begin position="331"/>
        <end position="333"/>
    </location>
</feature>
<feature type="helix" evidence="5">
    <location>
        <begin position="334"/>
        <end position="344"/>
    </location>
</feature>
<accession>Q6D6I7</accession>
<organism>
    <name type="scientific">Pectobacterium atrosepticum (strain SCRI 1043 / ATCC BAA-672)</name>
    <name type="common">Erwinia carotovora subsp. atroseptica</name>
    <dbReference type="NCBI Taxonomy" id="218491"/>
    <lineage>
        <taxon>Bacteria</taxon>
        <taxon>Pseudomonadati</taxon>
        <taxon>Pseudomonadota</taxon>
        <taxon>Gammaproteobacteria</taxon>
        <taxon>Enterobacterales</taxon>
        <taxon>Pectobacteriaceae</taxon>
        <taxon>Pectobacterium</taxon>
    </lineage>
</organism>
<sequence length="350" mass="37998">MSKIRVLCVDDSALMRQIMTEIINSHPDMEVVATAPDPLVARDLIKKFNPQVLTLDVEMPRMDGLDFLEKLMRLRPMPVVMVSSLTGKGSEITLRALELGAIDFVTKPQLGIREGMLAYSELIAEKIRMAAKARLPQRSTTAEPTKIIQHMPLLSSEKLIAIGASTGGTEAIRHVLQPLPPTSPALLITQHMPPGFTKSFAERLNKLCQITVKEAEDGERVLPGHAYIAPGARHLELARSGANYQVRLNDGPPVNRHRPSVDVLFRSVAQYAGRNAVGVILTGMGNDGAAGMLELHQAGAYTLAQNEASCVVFGMPREAIAMGGVDEVVDLHQVSQRMLAQISAGQALRI</sequence>
<reference key="1">
    <citation type="journal article" date="2004" name="Proc. Natl. Acad. Sci. U.S.A.">
        <title>Genome sequence of the enterobacterial phytopathogen Erwinia carotovora subsp. atroseptica and characterization of virulence factors.</title>
        <authorList>
            <person name="Bell K.S."/>
            <person name="Sebaihia M."/>
            <person name="Pritchard L."/>
            <person name="Holden M.T.G."/>
            <person name="Hyman L.J."/>
            <person name="Holeva M.C."/>
            <person name="Thomson N.R."/>
            <person name="Bentley S.D."/>
            <person name="Churcher L.J.C."/>
            <person name="Mungall K."/>
            <person name="Atkin R."/>
            <person name="Bason N."/>
            <person name="Brooks K."/>
            <person name="Chillingworth T."/>
            <person name="Clark K."/>
            <person name="Doggett J."/>
            <person name="Fraser A."/>
            <person name="Hance Z."/>
            <person name="Hauser H."/>
            <person name="Jagels K."/>
            <person name="Moule S."/>
            <person name="Norbertczak H."/>
            <person name="Ormond D."/>
            <person name="Price C."/>
            <person name="Quail M.A."/>
            <person name="Sanders M."/>
            <person name="Walker D."/>
            <person name="Whitehead S."/>
            <person name="Salmond G.P.C."/>
            <person name="Birch P.R.J."/>
            <person name="Parkhill J."/>
            <person name="Toth I.K."/>
        </authorList>
    </citation>
    <scope>NUCLEOTIDE SEQUENCE [LARGE SCALE GENOMIC DNA]</scope>
    <source>
        <strain>SCRI 1043 / ATCC BAA-672</strain>
    </source>
</reference>
<reference evidence="4" key="2">
    <citation type="journal article" date="2020" name="Int. J. Mol. Sci.">
        <title>Evidence for pentapeptide-dependent and independent CheB methylesterases.</title>
        <authorList>
            <person name="Velando F."/>
            <person name="Gavira J.A."/>
            <person name="Rico-Jimenez M."/>
            <person name="Matilla M.A."/>
            <person name="Krell T."/>
        </authorList>
    </citation>
    <scope>X-RAY CRYSTALLOGRAPHY (2.30 ANGSTROMS)</scope>
    <scope>FUNCTION</scope>
    <scope>DOMAIN</scope>
    <scope>DISRUPTION PHENOTYPE</scope>
    <source>
        <strain>SCRI 1043 / ATCC BAA-672</strain>
    </source>
</reference>
<proteinExistence type="evidence at protein level"/>
<comment type="function">
    <text evidence="1 2">Involved in chemotaxis. Part of a chemotaxis signal transduction system that modulates chemotaxis in response to various stimuli. Catalyzes the demethylation of specific methylglutamate residues introduced into the chemoreceptors (methyl-accepting chemotaxis proteins or MCP) by CheR. Also mediates the irreversible deamidation of specific glutamine residues to glutamic acid (By similarity). Does not interact with the C-terminal pentapeptide of the chemoreceptors (PubMed:33187094).</text>
</comment>
<comment type="catalytic activity">
    <reaction evidence="1">
        <text>[protein]-L-glutamate 5-O-methyl ester + H2O = L-glutamyl-[protein] + methanol + H(+)</text>
        <dbReference type="Rhea" id="RHEA:23236"/>
        <dbReference type="Rhea" id="RHEA-COMP:10208"/>
        <dbReference type="Rhea" id="RHEA-COMP:10311"/>
        <dbReference type="ChEBI" id="CHEBI:15377"/>
        <dbReference type="ChEBI" id="CHEBI:15378"/>
        <dbReference type="ChEBI" id="CHEBI:17790"/>
        <dbReference type="ChEBI" id="CHEBI:29973"/>
        <dbReference type="ChEBI" id="CHEBI:82795"/>
        <dbReference type="EC" id="3.1.1.61"/>
    </reaction>
</comment>
<comment type="catalytic activity">
    <reaction evidence="1">
        <text>L-glutaminyl-[protein] + H2O = L-glutamyl-[protein] + NH4(+)</text>
        <dbReference type="Rhea" id="RHEA:16441"/>
        <dbReference type="Rhea" id="RHEA-COMP:10207"/>
        <dbReference type="Rhea" id="RHEA-COMP:10208"/>
        <dbReference type="ChEBI" id="CHEBI:15377"/>
        <dbReference type="ChEBI" id="CHEBI:28938"/>
        <dbReference type="ChEBI" id="CHEBI:29973"/>
        <dbReference type="ChEBI" id="CHEBI:30011"/>
        <dbReference type="EC" id="3.5.1.44"/>
    </reaction>
</comment>
<comment type="subcellular location">
    <subcellularLocation>
        <location evidence="1">Cytoplasm</location>
    </subcellularLocation>
</comment>
<comment type="domain">
    <text evidence="2">Contains a C-terminal catalytic domain, and an N-terminal region which modulates catalytic activity. Domains are connected by a linker of approximately 25 amino acids (PubMed:33187094). The structural disorder in the region homologous to the pentapeptide-binding site in E.coli may be related to the failure to bind pentapeptides (PubMed:33187094).</text>
</comment>
<comment type="PTM">
    <text evidence="1">Phosphorylated by CheA. Phosphorylation of the N-terminal regulatory domain activates the methylesterase activity.</text>
</comment>
<comment type="disruption phenotype">
    <text evidence="2">Mutant does not mediate chemotaxis towards casamino acids.</text>
</comment>
<comment type="similarity">
    <text evidence="1">Belongs to the CheB family.</text>
</comment>
<protein>
    <recommendedName>
        <fullName evidence="1">Protein-glutamate methylesterase/protein-glutamine glutaminase</fullName>
        <ecNumber evidence="1">3.1.1.61</ecNumber>
        <ecNumber evidence="1">3.5.1.44</ecNumber>
    </recommendedName>
    <alternativeName>
        <fullName evidence="3">CheB_Pec</fullName>
    </alternativeName>
</protein>